<accession>O81906</accession>
<accession>Q0WPA4</accession>
<accession>Q9SVK2</accession>
<proteinExistence type="evidence at transcript level"/>
<gene>
    <name type="primary">B120</name>
    <name type="ordered locus">At4g21390</name>
    <name type="ORF">F18E5.10</name>
    <name type="ORF">T6K22.120</name>
</gene>
<evidence type="ECO:0000250" key="1"/>
<evidence type="ECO:0000250" key="2">
    <source>
        <dbReference type="UniProtKB" id="Q9LPZ9"/>
    </source>
</evidence>
<evidence type="ECO:0000255" key="3"/>
<evidence type="ECO:0000255" key="4">
    <source>
        <dbReference type="PROSITE-ProRule" id="PRU00038"/>
    </source>
</evidence>
<evidence type="ECO:0000255" key="5">
    <source>
        <dbReference type="PROSITE-ProRule" id="PRU00159"/>
    </source>
</evidence>
<evidence type="ECO:0000255" key="6">
    <source>
        <dbReference type="PROSITE-ProRule" id="PRU00315"/>
    </source>
</evidence>
<evidence type="ECO:0000255" key="7">
    <source>
        <dbReference type="PROSITE-ProRule" id="PRU10027"/>
    </source>
</evidence>
<evidence type="ECO:0000305" key="8"/>
<dbReference type="EC" id="2.7.11.1"/>
<dbReference type="EMBL" id="EF637083">
    <property type="protein sequence ID" value="ABV21215.1"/>
    <property type="molecule type" value="Genomic_DNA"/>
</dbReference>
<dbReference type="EMBL" id="AL022603">
    <property type="protein sequence ID" value="CAA18703.1"/>
    <property type="molecule type" value="Genomic_DNA"/>
</dbReference>
<dbReference type="EMBL" id="AL031187">
    <property type="protein sequence ID" value="CAA20204.1"/>
    <property type="molecule type" value="Genomic_DNA"/>
</dbReference>
<dbReference type="EMBL" id="AL161555">
    <property type="protein sequence ID" value="CAB81246.1"/>
    <property type="molecule type" value="Genomic_DNA"/>
</dbReference>
<dbReference type="EMBL" id="CP002687">
    <property type="protein sequence ID" value="AEE84447.1"/>
    <property type="molecule type" value="Genomic_DNA"/>
</dbReference>
<dbReference type="EMBL" id="AK229175">
    <property type="protein sequence ID" value="BAF01045.1"/>
    <property type="molecule type" value="mRNA"/>
</dbReference>
<dbReference type="PIR" id="T05181">
    <property type="entry name" value="T05181"/>
</dbReference>
<dbReference type="RefSeq" id="NP_193870.1">
    <property type="nucleotide sequence ID" value="NM_118259.4"/>
</dbReference>
<dbReference type="SMR" id="O81906"/>
<dbReference type="BioGRID" id="13182">
    <property type="interactions" value="3"/>
</dbReference>
<dbReference type="FunCoup" id="O81906">
    <property type="interactions" value="17"/>
</dbReference>
<dbReference type="IntAct" id="O81906">
    <property type="interactions" value="3"/>
</dbReference>
<dbReference type="STRING" id="3702.O81906"/>
<dbReference type="GlyCosmos" id="O81906">
    <property type="glycosylation" value="9 sites, No reported glycans"/>
</dbReference>
<dbReference type="GlyGen" id="O81906">
    <property type="glycosylation" value="9 sites"/>
</dbReference>
<dbReference type="iPTMnet" id="O81906"/>
<dbReference type="PaxDb" id="3702-AT4G21390.1"/>
<dbReference type="ProteomicsDB" id="241108"/>
<dbReference type="EnsemblPlants" id="AT4G21390.1">
    <property type="protein sequence ID" value="AT4G21390.1"/>
    <property type="gene ID" value="AT4G21390"/>
</dbReference>
<dbReference type="GeneID" id="827891"/>
<dbReference type="Gramene" id="AT4G21390.1">
    <property type="protein sequence ID" value="AT4G21390.1"/>
    <property type="gene ID" value="AT4G21390"/>
</dbReference>
<dbReference type="KEGG" id="ath:AT4G21390"/>
<dbReference type="Araport" id="AT4G21390"/>
<dbReference type="TAIR" id="AT4G21390">
    <property type="gene designation" value="B120"/>
</dbReference>
<dbReference type="eggNOG" id="ENOG502QSUU">
    <property type="taxonomic scope" value="Eukaryota"/>
</dbReference>
<dbReference type="HOGENOM" id="CLU_000288_116_5_1"/>
<dbReference type="InParanoid" id="O81906"/>
<dbReference type="OMA" id="TYTSMRK"/>
<dbReference type="OrthoDB" id="1910371at2759"/>
<dbReference type="PhylomeDB" id="O81906"/>
<dbReference type="PRO" id="PR:O81906"/>
<dbReference type="Proteomes" id="UP000006548">
    <property type="component" value="Chromosome 4"/>
</dbReference>
<dbReference type="ExpressionAtlas" id="O81906">
    <property type="expression patterns" value="baseline and differential"/>
</dbReference>
<dbReference type="GO" id="GO:0005886">
    <property type="term" value="C:plasma membrane"/>
    <property type="evidence" value="ECO:0007669"/>
    <property type="project" value="UniProtKB-SubCell"/>
</dbReference>
<dbReference type="GO" id="GO:0005524">
    <property type="term" value="F:ATP binding"/>
    <property type="evidence" value="ECO:0007669"/>
    <property type="project" value="UniProtKB-KW"/>
</dbReference>
<dbReference type="GO" id="GO:0005516">
    <property type="term" value="F:calmodulin binding"/>
    <property type="evidence" value="ECO:0000250"/>
    <property type="project" value="UniProtKB"/>
</dbReference>
<dbReference type="GO" id="GO:0030246">
    <property type="term" value="F:carbohydrate binding"/>
    <property type="evidence" value="ECO:0007669"/>
    <property type="project" value="UniProtKB-KW"/>
</dbReference>
<dbReference type="GO" id="GO:0106310">
    <property type="term" value="F:protein serine kinase activity"/>
    <property type="evidence" value="ECO:0007669"/>
    <property type="project" value="RHEA"/>
</dbReference>
<dbReference type="GO" id="GO:0004674">
    <property type="term" value="F:protein serine/threonine kinase activity"/>
    <property type="evidence" value="ECO:0000250"/>
    <property type="project" value="UniProtKB"/>
</dbReference>
<dbReference type="GO" id="GO:0031625">
    <property type="term" value="F:ubiquitin protein ligase binding"/>
    <property type="evidence" value="ECO:0007669"/>
    <property type="project" value="UniProtKB-ARBA"/>
</dbReference>
<dbReference type="GO" id="GO:0048544">
    <property type="term" value="P:recognition of pollen"/>
    <property type="evidence" value="ECO:0007669"/>
    <property type="project" value="InterPro"/>
</dbReference>
<dbReference type="CDD" id="cd00028">
    <property type="entry name" value="B_lectin"/>
    <property type="match status" value="1"/>
</dbReference>
<dbReference type="CDD" id="cd01098">
    <property type="entry name" value="PAN_AP_plant"/>
    <property type="match status" value="1"/>
</dbReference>
<dbReference type="CDD" id="cd14066">
    <property type="entry name" value="STKc_IRAK"/>
    <property type="match status" value="1"/>
</dbReference>
<dbReference type="FunFam" id="1.10.510.10:FF:000060">
    <property type="entry name" value="G-type lectin S-receptor-like serine/threonine-protein kinase"/>
    <property type="match status" value="1"/>
</dbReference>
<dbReference type="FunFam" id="2.90.10.10:FF:000005">
    <property type="entry name" value="G-type lectin S-receptor-like serine/threonine-protein kinase"/>
    <property type="match status" value="1"/>
</dbReference>
<dbReference type="FunFam" id="3.30.200.20:FF:000330">
    <property type="entry name" value="G-type lectin S-receptor-like serine/threonine-protein kinase At4g03230"/>
    <property type="match status" value="1"/>
</dbReference>
<dbReference type="Gene3D" id="2.90.10.10">
    <property type="entry name" value="Bulb-type lectin domain"/>
    <property type="match status" value="1"/>
</dbReference>
<dbReference type="Gene3D" id="3.30.200.20">
    <property type="entry name" value="Phosphorylase Kinase, domain 1"/>
    <property type="match status" value="1"/>
</dbReference>
<dbReference type="Gene3D" id="1.10.510.10">
    <property type="entry name" value="Transferase(Phosphotransferase) domain 1"/>
    <property type="match status" value="1"/>
</dbReference>
<dbReference type="InterPro" id="IPR001480">
    <property type="entry name" value="Bulb-type_lectin_dom"/>
</dbReference>
<dbReference type="InterPro" id="IPR036426">
    <property type="entry name" value="Bulb-type_lectin_dom_sf"/>
</dbReference>
<dbReference type="InterPro" id="IPR011009">
    <property type="entry name" value="Kinase-like_dom_sf"/>
</dbReference>
<dbReference type="InterPro" id="IPR003609">
    <property type="entry name" value="Pan_app"/>
</dbReference>
<dbReference type="InterPro" id="IPR000719">
    <property type="entry name" value="Prot_kinase_dom"/>
</dbReference>
<dbReference type="InterPro" id="IPR000858">
    <property type="entry name" value="S_locus_glycoprot_dom"/>
</dbReference>
<dbReference type="InterPro" id="IPR001245">
    <property type="entry name" value="Ser-Thr/Tyr_kinase_cat_dom"/>
</dbReference>
<dbReference type="InterPro" id="IPR008271">
    <property type="entry name" value="Ser/Thr_kinase_AS"/>
</dbReference>
<dbReference type="InterPro" id="IPR024171">
    <property type="entry name" value="SRK-like_kinase"/>
</dbReference>
<dbReference type="PANTHER" id="PTHR27002:SF1022">
    <property type="entry name" value="G-TYPE LECTIN S-RECEPTOR-LIKE SERINE_THREONINE-PROTEIN KINASE B120"/>
    <property type="match status" value="1"/>
</dbReference>
<dbReference type="PANTHER" id="PTHR27002">
    <property type="entry name" value="RECEPTOR-LIKE SERINE/THREONINE-PROTEIN KINASE SD1-8"/>
    <property type="match status" value="1"/>
</dbReference>
<dbReference type="Pfam" id="PF01453">
    <property type="entry name" value="B_lectin"/>
    <property type="match status" value="1"/>
</dbReference>
<dbReference type="Pfam" id="PF08276">
    <property type="entry name" value="PAN_2"/>
    <property type="match status" value="1"/>
</dbReference>
<dbReference type="Pfam" id="PF07714">
    <property type="entry name" value="PK_Tyr_Ser-Thr"/>
    <property type="match status" value="1"/>
</dbReference>
<dbReference type="Pfam" id="PF00954">
    <property type="entry name" value="S_locus_glycop"/>
    <property type="match status" value="1"/>
</dbReference>
<dbReference type="PIRSF" id="PIRSF000641">
    <property type="entry name" value="SRK"/>
    <property type="match status" value="1"/>
</dbReference>
<dbReference type="SMART" id="SM00108">
    <property type="entry name" value="B_lectin"/>
    <property type="match status" value="1"/>
</dbReference>
<dbReference type="SMART" id="SM00473">
    <property type="entry name" value="PAN_AP"/>
    <property type="match status" value="1"/>
</dbReference>
<dbReference type="SMART" id="SM00220">
    <property type="entry name" value="S_TKc"/>
    <property type="match status" value="1"/>
</dbReference>
<dbReference type="SUPFAM" id="SSF51110">
    <property type="entry name" value="alpha-D-mannose-specific plant lectins"/>
    <property type="match status" value="1"/>
</dbReference>
<dbReference type="SUPFAM" id="SSF56112">
    <property type="entry name" value="Protein kinase-like (PK-like)"/>
    <property type="match status" value="1"/>
</dbReference>
<dbReference type="PROSITE" id="PS50927">
    <property type="entry name" value="BULB_LECTIN"/>
    <property type="match status" value="1"/>
</dbReference>
<dbReference type="PROSITE" id="PS50948">
    <property type="entry name" value="PAN"/>
    <property type="match status" value="1"/>
</dbReference>
<dbReference type="PROSITE" id="PS50011">
    <property type="entry name" value="PROTEIN_KINASE_DOM"/>
    <property type="match status" value="1"/>
</dbReference>
<dbReference type="PROSITE" id="PS00108">
    <property type="entry name" value="PROTEIN_KINASE_ST"/>
    <property type="match status" value="1"/>
</dbReference>
<organism>
    <name type="scientific">Arabidopsis thaliana</name>
    <name type="common">Mouse-ear cress</name>
    <dbReference type="NCBI Taxonomy" id="3702"/>
    <lineage>
        <taxon>Eukaryota</taxon>
        <taxon>Viridiplantae</taxon>
        <taxon>Streptophyta</taxon>
        <taxon>Embryophyta</taxon>
        <taxon>Tracheophyta</taxon>
        <taxon>Spermatophyta</taxon>
        <taxon>Magnoliopsida</taxon>
        <taxon>eudicotyledons</taxon>
        <taxon>Gunneridae</taxon>
        <taxon>Pentapetalae</taxon>
        <taxon>rosids</taxon>
        <taxon>malvids</taxon>
        <taxon>Brassicales</taxon>
        <taxon>Brassicaceae</taxon>
        <taxon>Camelineae</taxon>
        <taxon>Arabidopsis</taxon>
    </lineage>
</organism>
<feature type="signal peptide" evidence="3">
    <location>
        <begin position="1"/>
        <end position="25"/>
    </location>
</feature>
<feature type="chain" id="PRO_0000401297" description="G-type lectin S-receptor-like serine/threonine-protein kinase B120">
    <location>
        <begin position="26"/>
        <end position="849"/>
    </location>
</feature>
<feature type="topological domain" description="Extracellular" evidence="3">
    <location>
        <begin position="26"/>
        <end position="438"/>
    </location>
</feature>
<feature type="transmembrane region" description="Helical" evidence="3">
    <location>
        <begin position="439"/>
        <end position="459"/>
    </location>
</feature>
<feature type="topological domain" description="Cytoplasmic" evidence="3">
    <location>
        <begin position="460"/>
        <end position="849"/>
    </location>
</feature>
<feature type="domain" description="Bulb-type lectin" evidence="4">
    <location>
        <begin position="26"/>
        <end position="153"/>
    </location>
</feature>
<feature type="domain" description="EGF-like; atypical">
    <location>
        <begin position="295"/>
        <end position="332"/>
    </location>
</feature>
<feature type="domain" description="PAN" evidence="6">
    <location>
        <begin position="346"/>
        <end position="427"/>
    </location>
</feature>
<feature type="domain" description="Protein kinase" evidence="5">
    <location>
        <begin position="529"/>
        <end position="814"/>
    </location>
</feature>
<feature type="region of interest" description="CaM-binding" evidence="1">
    <location>
        <begin position="618"/>
        <end position="635"/>
    </location>
</feature>
<feature type="active site" description="Proton acceptor" evidence="5 7">
    <location>
        <position position="654"/>
    </location>
</feature>
<feature type="binding site" evidence="5">
    <location>
        <begin position="535"/>
        <end position="543"/>
    </location>
    <ligand>
        <name>ATP</name>
        <dbReference type="ChEBI" id="CHEBI:30616"/>
    </ligand>
</feature>
<feature type="binding site" evidence="5">
    <location>
        <position position="557"/>
    </location>
    <ligand>
        <name>ATP</name>
        <dbReference type="ChEBI" id="CHEBI:30616"/>
    </ligand>
</feature>
<feature type="modified residue" description="Phosphoserine" evidence="2">
    <location>
        <position position="563"/>
    </location>
</feature>
<feature type="modified residue" description="Phosphoserine" evidence="2">
    <location>
        <position position="658"/>
    </location>
</feature>
<feature type="modified residue" description="Phosphoserine" evidence="2">
    <location>
        <position position="671"/>
    </location>
</feature>
<feature type="modified residue" description="Phosphothreonine" evidence="2">
    <location>
        <position position="688"/>
    </location>
</feature>
<feature type="modified residue" description="Phosphoserine" evidence="2">
    <location>
        <position position="732"/>
    </location>
</feature>
<feature type="modified residue" description="Phosphoserine" evidence="2">
    <location>
        <position position="837"/>
    </location>
</feature>
<feature type="modified residue" description="Phosphothreonine" evidence="2">
    <location>
        <position position="844"/>
    </location>
</feature>
<feature type="glycosylation site" description="N-linked (GlcNAc...) asparagine" evidence="3">
    <location>
        <position position="110"/>
    </location>
</feature>
<feature type="glycosylation site" description="N-linked (GlcNAc...) asparagine" evidence="3">
    <location>
        <position position="191"/>
    </location>
</feature>
<feature type="glycosylation site" description="N-linked (GlcNAc...) asparagine" evidence="3">
    <location>
        <position position="210"/>
    </location>
</feature>
<feature type="glycosylation site" description="N-linked (GlcNAc...) asparagine" evidence="3">
    <location>
        <position position="230"/>
    </location>
</feature>
<feature type="glycosylation site" description="N-linked (GlcNAc...) asparagine" evidence="3">
    <location>
        <position position="273"/>
    </location>
</feature>
<feature type="glycosylation site" description="N-linked (GlcNAc...) asparagine" evidence="3">
    <location>
        <position position="282"/>
    </location>
</feature>
<feature type="glycosylation site" description="N-linked (GlcNAc...) asparagine" evidence="3">
    <location>
        <position position="333"/>
    </location>
</feature>
<feature type="glycosylation site" description="N-linked (GlcNAc...) asparagine" evidence="3">
    <location>
        <position position="349"/>
    </location>
</feature>
<feature type="glycosylation site" description="N-linked (GlcNAc...) asparagine" evidence="3">
    <location>
        <position position="388"/>
    </location>
</feature>
<feature type="disulfide bond" evidence="1">
    <location>
        <begin position="299"/>
        <end position="311"/>
    </location>
</feature>
<feature type="disulfide bond" evidence="1">
    <location>
        <begin position="305"/>
        <end position="320"/>
    </location>
</feature>
<feature type="disulfide bond" evidence="1">
    <location>
        <begin position="381"/>
        <end position="402"/>
    </location>
</feature>
<feature type="disulfide bond" evidence="1">
    <location>
        <begin position="385"/>
        <end position="391"/>
    </location>
</feature>
<feature type="sequence conflict" description="In Ref. 4; BAF01045." evidence="8" ref="4">
    <original>V</original>
    <variation>A</variation>
    <location>
        <position position="795"/>
    </location>
</feature>
<sequence length="849" mass="95168">MRFFRKTSLYLSLFLYFFLYESSMAANTIRRGESLRDGINHKPLVSPQKTFELGFFSPGSSTHRFLGIWYGNIEDKAVVWVANRATPISDQSGVLMISNDGNLVLLDGKNITVWSSNIESSTTNNNNRVVSIHDTGNFVLSETDTDRPIWESFNHPTDTFLPQMRVRVNPQTGDNHAFVSWRSETDPSPGNYSLGVDPSGAPEIVLWEGNKTRKWRSGQWNSAIFTGIPNMSLLTNYLYGFKLSSPPDETGSVYFTYVPSDPSVLLRFKVLYNGTEEELRWNETLKKWTKFQSEPDSECDQYNRCGKFGICDMKGSNGICSCIHGYEQVSVGNWSRGCRRRTPLKCERNISVGEDEFLTLKSVKLPDFEIPEHNLVDPEDCRERCLRNCSCNAYSLVGGIGCMIWNQDLVDLQQFEAGGSSLHIRLADSEVGENRKTKIAVIVAVLVGVILIGIFALLLWRFKRKKDVSGAYCGKNTDTSVVVADLTKSKETTSAFSGSVDIMIEGKAVNTSELPVFSLNAIAIATNDFCKENELGRGGFGPVYKGVLEDGREIAVKRLSGKSGQGVDEFKNEIILIAKLQHRNLVRLLGCCFEGEEKMLVYEYMPNKSLDFFLFDETKQALIDWKLRFSIIEGIARGLLYLHRDSRLRIIHRDLKVSNVLLDAEMNPKISDFGMARIFGGNQNEANTVRVVGTYGYMSPEYAMEGLFSVKSDVYSFGVLLLEIVSGKRNTSLRSSEHGSLIGYAWYLYTHGRSEELVDPKIRVTCSKREALRCIHVAMLCVQDSAAERPNMASVLLMLESDTATLAAPRQPTFTSTRRNSIDVNFALDSSQQYIVSSNEITSTVVLGR</sequence>
<reference key="1">
    <citation type="journal article" date="2007" name="Science">
        <title>The evolution of selfing in Arabidopsis thaliana.</title>
        <authorList>
            <person name="Tang C."/>
            <person name="Toomajian C."/>
            <person name="Sherman-Broyles S."/>
            <person name="Plagnol V."/>
            <person name="Guo Y.-L."/>
            <person name="Hu T.T."/>
            <person name="Clark R.M."/>
            <person name="Nasrallah J.B."/>
            <person name="Weigel D."/>
            <person name="Nordborg M."/>
        </authorList>
    </citation>
    <scope>NUCLEOTIDE SEQUENCE [GENOMIC DNA]</scope>
    <source>
        <strain>cv. Cvi-0</strain>
    </source>
</reference>
<reference key="2">
    <citation type="journal article" date="1999" name="Nature">
        <title>Sequence and analysis of chromosome 4 of the plant Arabidopsis thaliana.</title>
        <authorList>
            <person name="Mayer K.F.X."/>
            <person name="Schueller C."/>
            <person name="Wambutt R."/>
            <person name="Murphy G."/>
            <person name="Volckaert G."/>
            <person name="Pohl T."/>
            <person name="Duesterhoeft A."/>
            <person name="Stiekema W."/>
            <person name="Entian K.-D."/>
            <person name="Terryn N."/>
            <person name="Harris B."/>
            <person name="Ansorge W."/>
            <person name="Brandt P."/>
            <person name="Grivell L.A."/>
            <person name="Rieger M."/>
            <person name="Weichselgartner M."/>
            <person name="de Simone V."/>
            <person name="Obermaier B."/>
            <person name="Mache R."/>
            <person name="Mueller M."/>
            <person name="Kreis M."/>
            <person name="Delseny M."/>
            <person name="Puigdomenech P."/>
            <person name="Watson M."/>
            <person name="Schmidtheini T."/>
            <person name="Reichert B."/>
            <person name="Portetelle D."/>
            <person name="Perez-Alonso M."/>
            <person name="Boutry M."/>
            <person name="Bancroft I."/>
            <person name="Vos P."/>
            <person name="Hoheisel J."/>
            <person name="Zimmermann W."/>
            <person name="Wedler H."/>
            <person name="Ridley P."/>
            <person name="Langham S.-A."/>
            <person name="McCullagh B."/>
            <person name="Bilham L."/>
            <person name="Robben J."/>
            <person name="van der Schueren J."/>
            <person name="Grymonprez B."/>
            <person name="Chuang Y.-J."/>
            <person name="Vandenbussche F."/>
            <person name="Braeken M."/>
            <person name="Weltjens I."/>
            <person name="Voet M."/>
            <person name="Bastiaens I."/>
            <person name="Aert R."/>
            <person name="Defoor E."/>
            <person name="Weitzenegger T."/>
            <person name="Bothe G."/>
            <person name="Ramsperger U."/>
            <person name="Hilbert H."/>
            <person name="Braun M."/>
            <person name="Holzer E."/>
            <person name="Brandt A."/>
            <person name="Peters S."/>
            <person name="van Staveren M."/>
            <person name="Dirkse W."/>
            <person name="Mooijman P."/>
            <person name="Klein Lankhorst R."/>
            <person name="Rose M."/>
            <person name="Hauf J."/>
            <person name="Koetter P."/>
            <person name="Berneiser S."/>
            <person name="Hempel S."/>
            <person name="Feldpausch M."/>
            <person name="Lamberth S."/>
            <person name="Van den Daele H."/>
            <person name="De Keyser A."/>
            <person name="Buysshaert C."/>
            <person name="Gielen J."/>
            <person name="Villarroel R."/>
            <person name="De Clercq R."/>
            <person name="van Montagu M."/>
            <person name="Rogers J."/>
            <person name="Cronin A."/>
            <person name="Quail M.A."/>
            <person name="Bray-Allen S."/>
            <person name="Clark L."/>
            <person name="Doggett J."/>
            <person name="Hall S."/>
            <person name="Kay M."/>
            <person name="Lennard N."/>
            <person name="McLay K."/>
            <person name="Mayes R."/>
            <person name="Pettett A."/>
            <person name="Rajandream M.A."/>
            <person name="Lyne M."/>
            <person name="Benes V."/>
            <person name="Rechmann S."/>
            <person name="Borkova D."/>
            <person name="Bloecker H."/>
            <person name="Scharfe M."/>
            <person name="Grimm M."/>
            <person name="Loehnert T.-H."/>
            <person name="Dose S."/>
            <person name="de Haan M."/>
            <person name="Maarse A.C."/>
            <person name="Schaefer M."/>
            <person name="Mueller-Auer S."/>
            <person name="Gabel C."/>
            <person name="Fuchs M."/>
            <person name="Fartmann B."/>
            <person name="Granderath K."/>
            <person name="Dauner D."/>
            <person name="Herzl A."/>
            <person name="Neumann S."/>
            <person name="Argiriou A."/>
            <person name="Vitale D."/>
            <person name="Liguori R."/>
            <person name="Piravandi E."/>
            <person name="Massenet O."/>
            <person name="Quigley F."/>
            <person name="Clabauld G."/>
            <person name="Muendlein A."/>
            <person name="Felber R."/>
            <person name="Schnabl S."/>
            <person name="Hiller R."/>
            <person name="Schmidt W."/>
            <person name="Lecharny A."/>
            <person name="Aubourg S."/>
            <person name="Chefdor F."/>
            <person name="Cooke R."/>
            <person name="Berger C."/>
            <person name="Monfort A."/>
            <person name="Casacuberta E."/>
            <person name="Gibbons T."/>
            <person name="Weber N."/>
            <person name="Vandenbol M."/>
            <person name="Bargues M."/>
            <person name="Terol J."/>
            <person name="Torres A."/>
            <person name="Perez-Perez A."/>
            <person name="Purnelle B."/>
            <person name="Bent E."/>
            <person name="Johnson S."/>
            <person name="Tacon D."/>
            <person name="Jesse T."/>
            <person name="Heijnen L."/>
            <person name="Schwarz S."/>
            <person name="Scholler P."/>
            <person name="Heber S."/>
            <person name="Francs P."/>
            <person name="Bielke C."/>
            <person name="Frishman D."/>
            <person name="Haase D."/>
            <person name="Lemcke K."/>
            <person name="Mewes H.-W."/>
            <person name="Stocker S."/>
            <person name="Zaccaria P."/>
            <person name="Bevan M."/>
            <person name="Wilson R.K."/>
            <person name="de la Bastide M."/>
            <person name="Habermann K."/>
            <person name="Parnell L."/>
            <person name="Dedhia N."/>
            <person name="Gnoj L."/>
            <person name="Schutz K."/>
            <person name="Huang E."/>
            <person name="Spiegel L."/>
            <person name="Sekhon M."/>
            <person name="Murray J."/>
            <person name="Sheet P."/>
            <person name="Cordes M."/>
            <person name="Abu-Threideh J."/>
            <person name="Stoneking T."/>
            <person name="Kalicki J."/>
            <person name="Graves T."/>
            <person name="Harmon G."/>
            <person name="Edwards J."/>
            <person name="Latreille P."/>
            <person name="Courtney L."/>
            <person name="Cloud J."/>
            <person name="Abbott A."/>
            <person name="Scott K."/>
            <person name="Johnson D."/>
            <person name="Minx P."/>
            <person name="Bentley D."/>
            <person name="Fulton B."/>
            <person name="Miller N."/>
            <person name="Greco T."/>
            <person name="Kemp K."/>
            <person name="Kramer J."/>
            <person name="Fulton L."/>
            <person name="Mardis E."/>
            <person name="Dante M."/>
            <person name="Pepin K."/>
            <person name="Hillier L.W."/>
            <person name="Nelson J."/>
            <person name="Spieth J."/>
            <person name="Ryan E."/>
            <person name="Andrews S."/>
            <person name="Geisel C."/>
            <person name="Layman D."/>
            <person name="Du H."/>
            <person name="Ali J."/>
            <person name="Berghoff A."/>
            <person name="Jones K."/>
            <person name="Drone K."/>
            <person name="Cotton M."/>
            <person name="Joshu C."/>
            <person name="Antonoiu B."/>
            <person name="Zidanic M."/>
            <person name="Strong C."/>
            <person name="Sun H."/>
            <person name="Lamar B."/>
            <person name="Yordan C."/>
            <person name="Ma P."/>
            <person name="Zhong J."/>
            <person name="Preston R."/>
            <person name="Vil D."/>
            <person name="Shekher M."/>
            <person name="Matero A."/>
            <person name="Shah R."/>
            <person name="Swaby I.K."/>
            <person name="O'Shaughnessy A."/>
            <person name="Rodriguez M."/>
            <person name="Hoffman J."/>
            <person name="Till S."/>
            <person name="Granat S."/>
            <person name="Shohdy N."/>
            <person name="Hasegawa A."/>
            <person name="Hameed A."/>
            <person name="Lodhi M."/>
            <person name="Johnson A."/>
            <person name="Chen E."/>
            <person name="Marra M.A."/>
            <person name="Martienssen R."/>
            <person name="McCombie W.R."/>
        </authorList>
    </citation>
    <scope>NUCLEOTIDE SEQUENCE [LARGE SCALE GENOMIC DNA]</scope>
    <source>
        <strain>cv. Columbia</strain>
    </source>
</reference>
<reference key="3">
    <citation type="journal article" date="2017" name="Plant J.">
        <title>Araport11: a complete reannotation of the Arabidopsis thaliana reference genome.</title>
        <authorList>
            <person name="Cheng C.Y."/>
            <person name="Krishnakumar V."/>
            <person name="Chan A.P."/>
            <person name="Thibaud-Nissen F."/>
            <person name="Schobel S."/>
            <person name="Town C.D."/>
        </authorList>
    </citation>
    <scope>GENOME REANNOTATION</scope>
    <source>
        <strain>cv. Columbia</strain>
    </source>
</reference>
<reference key="4">
    <citation type="submission" date="2006-07" db="EMBL/GenBank/DDBJ databases">
        <title>Large-scale analysis of RIKEN Arabidopsis full-length (RAFL) cDNAs.</title>
        <authorList>
            <person name="Totoki Y."/>
            <person name="Seki M."/>
            <person name="Ishida J."/>
            <person name="Nakajima M."/>
            <person name="Enju A."/>
            <person name="Kamiya A."/>
            <person name="Narusaka M."/>
            <person name="Shin-i T."/>
            <person name="Nakagawa M."/>
            <person name="Sakamoto N."/>
            <person name="Oishi K."/>
            <person name="Kohara Y."/>
            <person name="Kobayashi M."/>
            <person name="Toyoda A."/>
            <person name="Sakaki Y."/>
            <person name="Sakurai T."/>
            <person name="Iida K."/>
            <person name="Akiyama K."/>
            <person name="Satou M."/>
            <person name="Toyoda T."/>
            <person name="Konagaya A."/>
            <person name="Carninci P."/>
            <person name="Kawai J."/>
            <person name="Hayashizaki Y."/>
            <person name="Shinozaki K."/>
        </authorList>
    </citation>
    <scope>NUCLEOTIDE SEQUENCE [LARGE SCALE MRNA]</scope>
    <source>
        <strain>cv. Columbia</strain>
    </source>
</reference>
<keyword id="KW-0067">ATP-binding</keyword>
<keyword id="KW-1003">Cell membrane</keyword>
<keyword id="KW-1015">Disulfide bond</keyword>
<keyword id="KW-0245">EGF-like domain</keyword>
<keyword id="KW-0325">Glycoprotein</keyword>
<keyword id="KW-0418">Kinase</keyword>
<keyword id="KW-0430">Lectin</keyword>
<keyword id="KW-0472">Membrane</keyword>
<keyword id="KW-0547">Nucleotide-binding</keyword>
<keyword id="KW-0597">Phosphoprotein</keyword>
<keyword id="KW-0675">Receptor</keyword>
<keyword id="KW-1185">Reference proteome</keyword>
<keyword id="KW-0723">Serine/threonine-protein kinase</keyword>
<keyword id="KW-0732">Signal</keyword>
<keyword id="KW-0808">Transferase</keyword>
<keyword id="KW-0812">Transmembrane</keyword>
<keyword id="KW-1133">Transmembrane helix</keyword>
<name>B120_ARATH</name>
<comment type="catalytic activity">
    <reaction>
        <text>L-seryl-[protein] + ATP = O-phospho-L-seryl-[protein] + ADP + H(+)</text>
        <dbReference type="Rhea" id="RHEA:17989"/>
        <dbReference type="Rhea" id="RHEA-COMP:9863"/>
        <dbReference type="Rhea" id="RHEA-COMP:11604"/>
        <dbReference type="ChEBI" id="CHEBI:15378"/>
        <dbReference type="ChEBI" id="CHEBI:29999"/>
        <dbReference type="ChEBI" id="CHEBI:30616"/>
        <dbReference type="ChEBI" id="CHEBI:83421"/>
        <dbReference type="ChEBI" id="CHEBI:456216"/>
        <dbReference type="EC" id="2.7.11.1"/>
    </reaction>
</comment>
<comment type="catalytic activity">
    <reaction>
        <text>L-threonyl-[protein] + ATP = O-phospho-L-threonyl-[protein] + ADP + H(+)</text>
        <dbReference type="Rhea" id="RHEA:46608"/>
        <dbReference type="Rhea" id="RHEA-COMP:11060"/>
        <dbReference type="Rhea" id="RHEA-COMP:11605"/>
        <dbReference type="ChEBI" id="CHEBI:15378"/>
        <dbReference type="ChEBI" id="CHEBI:30013"/>
        <dbReference type="ChEBI" id="CHEBI:30616"/>
        <dbReference type="ChEBI" id="CHEBI:61977"/>
        <dbReference type="ChEBI" id="CHEBI:456216"/>
        <dbReference type="EC" id="2.7.11.1"/>
    </reaction>
</comment>
<comment type="subcellular location">
    <subcellularLocation>
        <location evidence="1">Cell membrane</location>
        <topology evidence="1">Single-pass type I membrane protein</topology>
    </subcellularLocation>
</comment>
<comment type="similarity">
    <text evidence="5">Belongs to the protein kinase superfamily. Ser/Thr protein kinase family.</text>
</comment>
<protein>
    <recommendedName>
        <fullName>G-type lectin S-receptor-like serine/threonine-protein kinase B120</fullName>
        <ecNumber>2.7.11.1</ecNumber>
    </recommendedName>
</protein>